<organism>
    <name type="scientific">Mycolicibacterium smegmatis (strain ATCC 700084 / mc(2)155)</name>
    <name type="common">Mycobacterium smegmatis</name>
    <dbReference type="NCBI Taxonomy" id="246196"/>
    <lineage>
        <taxon>Bacteria</taxon>
        <taxon>Bacillati</taxon>
        <taxon>Actinomycetota</taxon>
        <taxon>Actinomycetes</taxon>
        <taxon>Mycobacteriales</taxon>
        <taxon>Mycobacteriaceae</taxon>
        <taxon>Mycolicibacterium</taxon>
    </lineage>
</organism>
<evidence type="ECO:0000250" key="1">
    <source>
        <dbReference type="UniProtKB" id="P21513"/>
    </source>
</evidence>
<evidence type="ECO:0000255" key="2"/>
<evidence type="ECO:0000255" key="3">
    <source>
        <dbReference type="PROSITE-ProRule" id="PRU00180"/>
    </source>
</evidence>
<evidence type="ECO:0000256" key="4">
    <source>
        <dbReference type="SAM" id="MobiDB-lite"/>
    </source>
</evidence>
<evidence type="ECO:0000269" key="5">
    <source>
    </source>
</evidence>
<evidence type="ECO:0000269" key="6">
    <source>
    </source>
</evidence>
<evidence type="ECO:0000305" key="7"/>
<evidence type="ECO:0000305" key="8">
    <source>
    </source>
</evidence>
<name>RNE_MYCS2</name>
<dbReference type="EC" id="3.1.26.12"/>
<dbReference type="EMBL" id="CP000480">
    <property type="protein sequence ID" value="ABK75182.1"/>
    <property type="molecule type" value="Genomic_DNA"/>
</dbReference>
<dbReference type="EMBL" id="CP001663">
    <property type="protein sequence ID" value="AFP40963.1"/>
    <property type="molecule type" value="Genomic_DNA"/>
</dbReference>
<dbReference type="RefSeq" id="WP_011729971.1">
    <property type="nucleotide sequence ID" value="NZ_SIJM01000004.1"/>
</dbReference>
<dbReference type="RefSeq" id="YP_888890.1">
    <property type="nucleotide sequence ID" value="NC_008596.1"/>
</dbReference>
<dbReference type="SMR" id="A0R152"/>
<dbReference type="STRING" id="246196.MSMEG_4626"/>
<dbReference type="PaxDb" id="246196-MSMEI_4509"/>
<dbReference type="KEGG" id="msb:LJ00_22880"/>
<dbReference type="KEGG" id="msg:MSMEI_4509"/>
<dbReference type="KEGG" id="msm:MSMEG_4626"/>
<dbReference type="PATRIC" id="fig|246196.19.peg.4521"/>
<dbReference type="eggNOG" id="COG1530">
    <property type="taxonomic scope" value="Bacteria"/>
</dbReference>
<dbReference type="OrthoDB" id="9804278at2"/>
<dbReference type="Proteomes" id="UP000000757">
    <property type="component" value="Chromosome"/>
</dbReference>
<dbReference type="Proteomes" id="UP000006158">
    <property type="component" value="Chromosome"/>
</dbReference>
<dbReference type="GO" id="GO:0005737">
    <property type="term" value="C:cytoplasm"/>
    <property type="evidence" value="ECO:0007669"/>
    <property type="project" value="UniProtKB-SubCell"/>
</dbReference>
<dbReference type="GO" id="GO:0046872">
    <property type="term" value="F:metal ion binding"/>
    <property type="evidence" value="ECO:0007669"/>
    <property type="project" value="UniProtKB-KW"/>
</dbReference>
<dbReference type="GO" id="GO:0004540">
    <property type="term" value="F:RNA nuclease activity"/>
    <property type="evidence" value="ECO:0007669"/>
    <property type="project" value="InterPro"/>
</dbReference>
<dbReference type="GO" id="GO:0019843">
    <property type="term" value="F:rRNA binding"/>
    <property type="evidence" value="ECO:0007669"/>
    <property type="project" value="UniProtKB-KW"/>
</dbReference>
<dbReference type="GO" id="GO:0000049">
    <property type="term" value="F:tRNA binding"/>
    <property type="evidence" value="ECO:0007669"/>
    <property type="project" value="UniProtKB-KW"/>
</dbReference>
<dbReference type="GO" id="GO:0006397">
    <property type="term" value="P:mRNA processing"/>
    <property type="evidence" value="ECO:0000315"/>
    <property type="project" value="UniProtKB"/>
</dbReference>
<dbReference type="GO" id="GO:0006364">
    <property type="term" value="P:rRNA processing"/>
    <property type="evidence" value="ECO:0000315"/>
    <property type="project" value="UniProtKB"/>
</dbReference>
<dbReference type="GO" id="GO:0008033">
    <property type="term" value="P:tRNA processing"/>
    <property type="evidence" value="ECO:0007669"/>
    <property type="project" value="UniProtKB-KW"/>
</dbReference>
<dbReference type="CDD" id="cd04453">
    <property type="entry name" value="S1_RNase_E"/>
    <property type="match status" value="1"/>
</dbReference>
<dbReference type="FunFam" id="2.40.50.140:FF:000066">
    <property type="entry name" value="Ribonuclease E"/>
    <property type="match status" value="1"/>
</dbReference>
<dbReference type="Gene3D" id="1.10.10.2480">
    <property type="match status" value="1"/>
</dbReference>
<dbReference type="Gene3D" id="2.40.50.140">
    <property type="entry name" value="Nucleic acid-binding proteins"/>
    <property type="match status" value="1"/>
</dbReference>
<dbReference type="InterPro" id="IPR012340">
    <property type="entry name" value="NA-bd_OB-fold"/>
</dbReference>
<dbReference type="InterPro" id="IPR019307">
    <property type="entry name" value="RNA-bd_AU-1/RNase_E/G"/>
</dbReference>
<dbReference type="InterPro" id="IPR004659">
    <property type="entry name" value="RNase_E/G"/>
</dbReference>
<dbReference type="InterPro" id="IPR003029">
    <property type="entry name" value="S1_domain"/>
</dbReference>
<dbReference type="NCBIfam" id="TIGR00757">
    <property type="entry name" value="RNaseEG"/>
    <property type="match status" value="1"/>
</dbReference>
<dbReference type="PANTHER" id="PTHR30001">
    <property type="entry name" value="RIBONUCLEASE"/>
    <property type="match status" value="1"/>
</dbReference>
<dbReference type="PANTHER" id="PTHR30001:SF0">
    <property type="entry name" value="RIBONUCLEASE G"/>
    <property type="match status" value="1"/>
</dbReference>
<dbReference type="Pfam" id="PF10150">
    <property type="entry name" value="RNase_E_G"/>
    <property type="match status" value="1"/>
</dbReference>
<dbReference type="SMART" id="SM00316">
    <property type="entry name" value="S1"/>
    <property type="match status" value="1"/>
</dbReference>
<dbReference type="SUPFAM" id="SSF50249">
    <property type="entry name" value="Nucleic acid-binding proteins"/>
    <property type="match status" value="1"/>
</dbReference>
<dbReference type="PROSITE" id="PS50126">
    <property type="entry name" value="S1"/>
    <property type="match status" value="1"/>
</dbReference>
<comment type="function">
    <text evidence="1 5 6">Endoribonuclease that plays a central role in RNA processing and decay. Plays a major role in pre-16S rRNA maturation, probably generating the mature 5'-end, and a minor role in pre-5S and pre-23S rRNA maturation (PubMed:22014150). Probably also processes tRNA (By similarity). RNase E and HupB jointly contribute to cellular adaptation to changing growth conditions and survival during antibiotic treatment. Overexpression or depletion leads to changes in gene expression; overexpression induces metabolic slowdown and cell stress while depleted strains grow less well than induced strains (PubMed:35521527).</text>
</comment>
<comment type="catalytic activity">
    <reaction>
        <text>Endonucleolytic cleavage of single-stranded RNA in A- and U-rich regions.</text>
        <dbReference type="EC" id="3.1.26.12"/>
    </reaction>
</comment>
<comment type="cofactor">
    <cofactor evidence="1">
        <name>Mg(2+)</name>
        <dbReference type="ChEBI" id="CHEBI:18420"/>
    </cofactor>
    <text evidence="1">Binds 1 Mg(2+) ion per subunit.</text>
</comment>
<comment type="cofactor">
    <cofactor evidence="1">
        <name>Zn(2+)</name>
        <dbReference type="ChEBI" id="CHEBI:29105"/>
    </cofactor>
    <text evidence="1">Binds 2 Zn(2+) ions per homotetramer. Zinc ions are bound between subunits.</text>
</comment>
<comment type="subunit">
    <text evidence="1 8">Assembles into a homotetramer formed by a dimer of dimers (By similarity). Interacts with DNA-binding protein HhupB (Probable) (PubMed:35521527).</text>
</comment>
<comment type="subcellular location">
    <subcellularLocation>
        <location evidence="6">Cytoplasm</location>
    </subcellularLocation>
    <text evidence="6">Has dynamic expression patterns, often present as foci near the mid-cell or new cell pole in addition to a weaker overall cytoplasmic distribution. Colocalizes with HupB (PubMed:35521527).</text>
</comment>
<comment type="disruption phenotype">
    <text evidence="5 6">Essential, it cannot be deleted. Depletion experiments show decreased processing of furA-katG operon mRNA, altered processing of pre-16S rRNA, minor effects on pre-23S rRNA processing. A double rnj-rne depletion mutant has decreased amounts of mature 5S rRNA (PubMed:22014150). Depletion experiments show a decrease in growth rate and decreased expression levels of many transcripts, and suggests rne and hupB are coregulated (PubMed:35521527).</text>
</comment>
<comment type="similarity">
    <text evidence="7">Belongs to the RNase E/G family.</text>
</comment>
<accession>A0R152</accession>
<keyword id="KW-0175">Coiled coil</keyword>
<keyword id="KW-0963">Cytoplasm</keyword>
<keyword id="KW-0378">Hydrolase</keyword>
<keyword id="KW-0460">Magnesium</keyword>
<keyword id="KW-0479">Metal-binding</keyword>
<keyword id="KW-0507">mRNA processing</keyword>
<keyword id="KW-1185">Reference proteome</keyword>
<keyword id="KW-0694">RNA-binding</keyword>
<keyword id="KW-0698">rRNA processing</keyword>
<keyword id="KW-0699">rRNA-binding</keyword>
<keyword id="KW-0819">tRNA processing</keyword>
<keyword id="KW-0820">tRNA-binding</keyword>
<keyword id="KW-0862">Zinc</keyword>
<gene>
    <name type="primary">rne</name>
    <name type="ordered locus">MSMEG_4626</name>
    <name type="ordered locus">MSMEI_4509</name>
</gene>
<reference key="1">
    <citation type="submission" date="2006-10" db="EMBL/GenBank/DDBJ databases">
        <authorList>
            <person name="Fleischmann R.D."/>
            <person name="Dodson R.J."/>
            <person name="Haft D.H."/>
            <person name="Merkel J.S."/>
            <person name="Nelson W.C."/>
            <person name="Fraser C.M."/>
        </authorList>
    </citation>
    <scope>NUCLEOTIDE SEQUENCE [LARGE SCALE GENOMIC DNA]</scope>
    <source>
        <strain>ATCC 700084 / mc(2)155</strain>
    </source>
</reference>
<reference key="2">
    <citation type="journal article" date="2007" name="Genome Biol.">
        <title>Interrupted coding sequences in Mycobacterium smegmatis: authentic mutations or sequencing errors?</title>
        <authorList>
            <person name="Deshayes C."/>
            <person name="Perrodou E."/>
            <person name="Gallien S."/>
            <person name="Euphrasie D."/>
            <person name="Schaeffer C."/>
            <person name="Van-Dorsselaer A."/>
            <person name="Poch O."/>
            <person name="Lecompte O."/>
            <person name="Reyrat J.-M."/>
        </authorList>
    </citation>
    <scope>NUCLEOTIDE SEQUENCE [LARGE SCALE GENOMIC DNA]</scope>
    <source>
        <strain>ATCC 700084 / mc(2)155</strain>
    </source>
</reference>
<reference key="3">
    <citation type="journal article" date="2009" name="Genome Res.">
        <title>Ortho-proteogenomics: multiple proteomes investigation through orthology and a new MS-based protocol.</title>
        <authorList>
            <person name="Gallien S."/>
            <person name="Perrodou E."/>
            <person name="Carapito C."/>
            <person name="Deshayes C."/>
            <person name="Reyrat J.-M."/>
            <person name="Van Dorsselaer A."/>
            <person name="Poch O."/>
            <person name="Schaeffer C."/>
            <person name="Lecompte O."/>
        </authorList>
    </citation>
    <scope>NUCLEOTIDE SEQUENCE [LARGE SCALE GENOMIC DNA]</scope>
    <source>
        <strain>ATCC 700084 / mc(2)155</strain>
    </source>
</reference>
<reference key="4">
    <citation type="journal article" date="2011" name="Mol. Microbiol.">
        <title>Mycobacterium smegmatis RNase J is a 5'-3' exo-/endoribonuclease and both RNase J and RNase E are involved in ribosomal RNA maturation.</title>
        <authorList>
            <person name="Taverniti V."/>
            <person name="Forti F."/>
            <person name="Ghisotti D."/>
            <person name="Putzer H."/>
        </authorList>
    </citation>
    <scope>FUNCTION</scope>
    <scope>DISRUPTION PHENOTYPE</scope>
    <source>
        <strain>ATCC 700084 / mc(2)155</strain>
    </source>
</reference>
<reference key="5">
    <citation type="journal article" date="2022" name="IScience">
        <title>RNase E and HupB dynamics foster mycobacterial cell homeostasis and fitness.</title>
        <authorList>
            <person name="Griego A."/>
            <person name="Douche T."/>
            <person name="Gianetto Q.G."/>
            <person name="Matondo M."/>
            <person name="Manina G."/>
        </authorList>
    </citation>
    <scope>FUNCTION</scope>
    <scope>REGULON</scope>
    <scope>INTERACTION WITH HUPB</scope>
    <scope>SUBCELLULAR LOCATION</scope>
    <scope>DISRUPTION PHENOTYPE</scope>
    <source>
        <strain>ATCC 700084 / mc(2)155</strain>
    </source>
</reference>
<protein>
    <recommendedName>
        <fullName>Ribonuclease E</fullName>
        <shortName>RNase E</shortName>
        <ecNumber>3.1.26.12</ecNumber>
    </recommendedName>
</protein>
<feature type="chain" id="PRO_0000429579" description="Ribonuclease E">
    <location>
        <begin position="1"/>
        <end position="1037"/>
    </location>
</feature>
<feature type="domain" description="S1 motif" evidence="3">
    <location>
        <begin position="427"/>
        <end position="504"/>
    </location>
</feature>
<feature type="region of interest" description="Disordered" evidence="4">
    <location>
        <begin position="1"/>
        <end position="23"/>
    </location>
</feature>
<feature type="region of interest" description="Disordered" evidence="4">
    <location>
        <begin position="47"/>
        <end position="90"/>
    </location>
</feature>
<feature type="region of interest" description="Disordered" evidence="4">
    <location>
        <begin position="106"/>
        <end position="369"/>
    </location>
</feature>
<feature type="region of interest" description="Disordered" evidence="4">
    <location>
        <begin position="810"/>
        <end position="1037"/>
    </location>
</feature>
<feature type="coiled-coil region" evidence="2">
    <location>
        <begin position="561"/>
        <end position="589"/>
    </location>
</feature>
<feature type="compositionally biased region" description="Basic and acidic residues" evidence="4">
    <location>
        <begin position="47"/>
        <end position="67"/>
    </location>
</feature>
<feature type="compositionally biased region" description="Low complexity" evidence="4">
    <location>
        <begin position="68"/>
        <end position="90"/>
    </location>
</feature>
<feature type="compositionally biased region" description="Low complexity" evidence="4">
    <location>
        <begin position="106"/>
        <end position="126"/>
    </location>
</feature>
<feature type="compositionally biased region" description="Acidic residues" evidence="4">
    <location>
        <begin position="127"/>
        <end position="141"/>
    </location>
</feature>
<feature type="compositionally biased region" description="Acidic residues" evidence="4">
    <location>
        <begin position="196"/>
        <end position="226"/>
    </location>
</feature>
<feature type="compositionally biased region" description="Basic residues" evidence="4">
    <location>
        <begin position="230"/>
        <end position="242"/>
    </location>
</feature>
<feature type="compositionally biased region" description="Acidic residues" evidence="4">
    <location>
        <begin position="248"/>
        <end position="284"/>
    </location>
</feature>
<feature type="compositionally biased region" description="Basic residues" evidence="4">
    <location>
        <begin position="291"/>
        <end position="301"/>
    </location>
</feature>
<feature type="compositionally biased region" description="Basic and acidic residues" evidence="4">
    <location>
        <begin position="320"/>
        <end position="335"/>
    </location>
</feature>
<feature type="compositionally biased region" description="Basic residues" evidence="4">
    <location>
        <begin position="834"/>
        <end position="843"/>
    </location>
</feature>
<feature type="compositionally biased region" description="Basic and acidic residues" evidence="4">
    <location>
        <begin position="844"/>
        <end position="864"/>
    </location>
</feature>
<feature type="compositionally biased region" description="Acidic residues" evidence="4">
    <location>
        <begin position="879"/>
        <end position="891"/>
    </location>
</feature>
<feature type="compositionally biased region" description="Basic and acidic residues" evidence="4">
    <location>
        <begin position="897"/>
        <end position="913"/>
    </location>
</feature>
<feature type="compositionally biased region" description="Acidic residues" evidence="4">
    <location>
        <begin position="923"/>
        <end position="1006"/>
    </location>
</feature>
<feature type="binding site" evidence="1">
    <location>
        <position position="694"/>
    </location>
    <ligand>
        <name>Mg(2+)</name>
        <dbReference type="ChEBI" id="CHEBI:18420"/>
        <note>catalytic</note>
    </ligand>
</feature>
<feature type="binding site" evidence="1">
    <location>
        <position position="738"/>
    </location>
    <ligand>
        <name>Mg(2+)</name>
        <dbReference type="ChEBI" id="CHEBI:18420"/>
        <note>catalytic</note>
    </ligand>
</feature>
<feature type="binding site" evidence="1">
    <location>
        <position position="796"/>
    </location>
    <ligand>
        <name>Zn(2+)</name>
        <dbReference type="ChEBI" id="CHEBI:29105"/>
        <note>ligand shared between dimeric partners</note>
    </ligand>
</feature>
<feature type="binding site" evidence="1">
    <location>
        <position position="799"/>
    </location>
    <ligand>
        <name>Zn(2+)</name>
        <dbReference type="ChEBI" id="CHEBI:29105"/>
        <note>ligand shared between dimeric partners</note>
    </ligand>
</feature>
<proteinExistence type="evidence at protein level"/>
<sequence>MAEDAHTEDLSTQTPQQEGLPERLRVHSLARVLGTTSRRVLDALAEFDGRQRSAHSTVDKADAERVRAALTESPAAETPPEEAPAAETPVADLVVVQAEQVEVVTVSEAGPAEPAEPAEPEAPAAEAEAEAETEVADEAETPEPTFRGAVLVGDEPESRLILEHANIPPARETQTERPDYLPLFVAPQPVSFEPAVVDDEDEDDDTETGAESDFDSGADSDSDDDQADRPRRRRRGRRGRGRGRGEQNDDATSDADTDSTEDQTDGDEQESGEDSDDSGDEDSTTTEGGTRRRRRRRRRKSGSGDSDDAVSPDDPPNTVVHERAPRTERSDKSDDSEIQGISGSTRLEAKRQRRRDGRDAGRRRPPILSEAEFLARREAVERTMIVRDKVRTEPPHEGARYTQIAVLEDGVVVEHFVTSAASASLVGNIYLGIVQNVLPSMEAAFVDIGRGRNGVLYAGEVNWEAAGLGGQNRKIEQALKPGDYVVVQVSKDPVGHKGARLTTQVSLAGRYLVYVPGASSTGISRKLPDTERQRLKEILREVVPSDAGVIIRTASEGVKEEDIRSDVERLQKRWSEIEAKAAEVTEKKAGAAVALYEEPDVLVKVIRDLFNEDFSSLIVSGDEAWNTINSYVEAVAPDLMPRLTKYEPAGPDAPDVFAVHRIDEQLAKAMDRKVWLPSGGTLVIDRTEAMTVVDVNTGKFTGSGGNLEQTVTRNNLEAAEEIVRQLRLRDIGGIVVIDFIDMVLESNRDLVLRRLTEALARDRTRHQVSEVTSLGLVQLTRKRLGTGLVEAFSTACTHCGGRGIVLHGDPIDSASSNGGRKSDSSGGGGSGGGRRGKRGKKGAARTEEVHVAKVPDHTPGEHPMFKAMAAANGKHEGDEDHEDHEDHETAEDTTAAEVRDDTRDEHDADERAHVVTAAVGAAGDEDLDDSDEDSDLDSDEESDDESDEDEIELDDDEDELDEDIEVIGDSDDSDDSDDSDEDDDSDDSDDDSDEDEDSDSDEDEEPVREVYEPPVTAPRARVRRRAAARPAGPPSHD</sequence>